<dbReference type="EC" id="6.3.5.3" evidence="2"/>
<dbReference type="EMBL" id="AE000782">
    <property type="protein sequence ID" value="AAB89310.1"/>
    <property type="molecule type" value="Genomic_DNA"/>
</dbReference>
<dbReference type="PIR" id="D69492">
    <property type="entry name" value="D69492"/>
</dbReference>
<dbReference type="RefSeq" id="WP_010879434.1">
    <property type="nucleotide sequence ID" value="NC_000917.1"/>
</dbReference>
<dbReference type="SMR" id="O28338"/>
<dbReference type="STRING" id="224325.AF_1941"/>
<dbReference type="PaxDb" id="224325-AF_1941"/>
<dbReference type="EnsemblBacteria" id="AAB89310">
    <property type="protein sequence ID" value="AAB89310"/>
    <property type="gene ID" value="AF_1941"/>
</dbReference>
<dbReference type="GeneID" id="24795684"/>
<dbReference type="KEGG" id="afu:AF_1941"/>
<dbReference type="eggNOG" id="arCOG04462">
    <property type="taxonomic scope" value="Archaea"/>
</dbReference>
<dbReference type="HOGENOM" id="CLU_164833_3_0_2"/>
<dbReference type="OrthoDB" id="56303at2157"/>
<dbReference type="PhylomeDB" id="O28338"/>
<dbReference type="UniPathway" id="UPA00074">
    <property type="reaction ID" value="UER00128"/>
</dbReference>
<dbReference type="Proteomes" id="UP000002199">
    <property type="component" value="Chromosome"/>
</dbReference>
<dbReference type="GO" id="GO:0005737">
    <property type="term" value="C:cytoplasm"/>
    <property type="evidence" value="ECO:0007669"/>
    <property type="project" value="UniProtKB-SubCell"/>
</dbReference>
<dbReference type="GO" id="GO:0005524">
    <property type="term" value="F:ATP binding"/>
    <property type="evidence" value="ECO:0007669"/>
    <property type="project" value="UniProtKB-UniRule"/>
</dbReference>
<dbReference type="GO" id="GO:0004642">
    <property type="term" value="F:phosphoribosylformylglycinamidine synthase activity"/>
    <property type="evidence" value="ECO:0007669"/>
    <property type="project" value="UniProtKB-UniRule"/>
</dbReference>
<dbReference type="GO" id="GO:0006189">
    <property type="term" value="P:'de novo' IMP biosynthetic process"/>
    <property type="evidence" value="ECO:0007669"/>
    <property type="project" value="UniProtKB-UniRule"/>
</dbReference>
<dbReference type="Gene3D" id="3.30.1280.10">
    <property type="entry name" value="Phosphoribosylformylglycinamidine synthase subunit PurS"/>
    <property type="match status" value="1"/>
</dbReference>
<dbReference type="HAMAP" id="MF_01926">
    <property type="entry name" value="PurS"/>
    <property type="match status" value="1"/>
</dbReference>
<dbReference type="InterPro" id="IPR003850">
    <property type="entry name" value="PurS"/>
</dbReference>
<dbReference type="InterPro" id="IPR036604">
    <property type="entry name" value="PurS-like_sf"/>
</dbReference>
<dbReference type="NCBIfam" id="TIGR00302">
    <property type="entry name" value="phosphoribosylformylglycinamidine synthase subunit PurS"/>
    <property type="match status" value="1"/>
</dbReference>
<dbReference type="NCBIfam" id="NF004630">
    <property type="entry name" value="PRK05974.1"/>
    <property type="match status" value="1"/>
</dbReference>
<dbReference type="PANTHER" id="PTHR34696">
    <property type="entry name" value="PHOSPHORIBOSYLFORMYLGLYCINAMIDINE SYNTHASE SUBUNIT PURS"/>
    <property type="match status" value="1"/>
</dbReference>
<dbReference type="PANTHER" id="PTHR34696:SF1">
    <property type="entry name" value="PHOSPHORIBOSYLFORMYLGLYCINAMIDINE SYNTHASE SUBUNIT PURS"/>
    <property type="match status" value="1"/>
</dbReference>
<dbReference type="Pfam" id="PF02700">
    <property type="entry name" value="PurS"/>
    <property type="match status" value="1"/>
</dbReference>
<dbReference type="SUPFAM" id="SSF82697">
    <property type="entry name" value="PurS-like"/>
    <property type="match status" value="1"/>
</dbReference>
<proteinExistence type="inferred from homology"/>
<name>PURS_ARCFU</name>
<keyword id="KW-0067">ATP-binding</keyword>
<keyword id="KW-0963">Cytoplasm</keyword>
<keyword id="KW-0436">Ligase</keyword>
<keyword id="KW-0547">Nucleotide-binding</keyword>
<keyword id="KW-0658">Purine biosynthesis</keyword>
<keyword id="KW-1185">Reference proteome</keyword>
<protein>
    <recommendedName>
        <fullName evidence="2">Phosphoribosylformylglycinamidine synthase subunit PurS</fullName>
        <shortName evidence="2">FGAM synthase</shortName>
        <ecNumber evidence="2">6.3.5.3</ecNumber>
    </recommendedName>
    <alternativeName>
        <fullName evidence="2">Formylglycinamide ribonucleotide amidotransferase subunit III</fullName>
        <shortName evidence="2">FGAR amidotransferase III</shortName>
        <shortName evidence="2">FGAR-AT III</shortName>
    </alternativeName>
    <alternativeName>
        <fullName evidence="2">Phosphoribosylformylglycinamidine synthase subunit III</fullName>
    </alternativeName>
</protein>
<accession>O28338</accession>
<reference key="1">
    <citation type="journal article" date="1997" name="Nature">
        <title>The complete genome sequence of the hyperthermophilic, sulphate-reducing archaeon Archaeoglobus fulgidus.</title>
        <authorList>
            <person name="Klenk H.-P."/>
            <person name="Clayton R.A."/>
            <person name="Tomb J.-F."/>
            <person name="White O."/>
            <person name="Nelson K.E."/>
            <person name="Ketchum K.A."/>
            <person name="Dodson R.J."/>
            <person name="Gwinn M.L."/>
            <person name="Hickey E.K."/>
            <person name="Peterson J.D."/>
            <person name="Richardson D.L."/>
            <person name="Kerlavage A.R."/>
            <person name="Graham D.E."/>
            <person name="Kyrpides N.C."/>
            <person name="Fleischmann R.D."/>
            <person name="Quackenbush J."/>
            <person name="Lee N.H."/>
            <person name="Sutton G.G."/>
            <person name="Gill S.R."/>
            <person name="Kirkness E.F."/>
            <person name="Dougherty B.A."/>
            <person name="McKenney K."/>
            <person name="Adams M.D."/>
            <person name="Loftus B.J."/>
            <person name="Peterson S.N."/>
            <person name="Reich C.I."/>
            <person name="McNeil L.K."/>
            <person name="Badger J.H."/>
            <person name="Glodek A."/>
            <person name="Zhou L."/>
            <person name="Overbeek R."/>
            <person name="Gocayne J.D."/>
            <person name="Weidman J.F."/>
            <person name="McDonald L.A."/>
            <person name="Utterback T.R."/>
            <person name="Cotton M.D."/>
            <person name="Spriggs T."/>
            <person name="Artiach P."/>
            <person name="Kaine B.P."/>
            <person name="Sykes S.M."/>
            <person name="Sadow P.W."/>
            <person name="D'Andrea K.P."/>
            <person name="Bowman C."/>
            <person name="Fujii C."/>
            <person name="Garland S.A."/>
            <person name="Mason T.M."/>
            <person name="Olsen G.J."/>
            <person name="Fraser C.M."/>
            <person name="Smith H.O."/>
            <person name="Woese C.R."/>
            <person name="Venter J.C."/>
        </authorList>
    </citation>
    <scope>NUCLEOTIDE SEQUENCE [LARGE SCALE GENOMIC DNA]</scope>
    <source>
        <strain>ATCC 49558 / DSM 4304 / JCM 9628 / NBRC 100126 / VC-16</strain>
    </source>
</reference>
<comment type="function">
    <text evidence="2">Part of the phosphoribosylformylglycinamidine synthase complex involved in the purines biosynthetic pathway. Catalyzes the ATP-dependent conversion of formylglycinamide ribonucleotide (FGAR) and glutamine to yield formylglycinamidine ribonucleotide (FGAM) and glutamate. The FGAM synthase complex is composed of three subunits. PurQ produces an ammonia molecule by converting glutamine to glutamate. PurL transfers the ammonia molecule to FGAR to form FGAM in an ATP-dependent manner. PurS interacts with PurQ and PurL and is thought to assist in the transfer of the ammonia molecule from PurQ to PurL.</text>
</comment>
<comment type="catalytic activity">
    <reaction evidence="2">
        <text>N(2)-formyl-N(1)-(5-phospho-beta-D-ribosyl)glycinamide + L-glutamine + ATP + H2O = 2-formamido-N(1)-(5-O-phospho-beta-D-ribosyl)acetamidine + L-glutamate + ADP + phosphate + H(+)</text>
        <dbReference type="Rhea" id="RHEA:17129"/>
        <dbReference type="ChEBI" id="CHEBI:15377"/>
        <dbReference type="ChEBI" id="CHEBI:15378"/>
        <dbReference type="ChEBI" id="CHEBI:29985"/>
        <dbReference type="ChEBI" id="CHEBI:30616"/>
        <dbReference type="ChEBI" id="CHEBI:43474"/>
        <dbReference type="ChEBI" id="CHEBI:58359"/>
        <dbReference type="ChEBI" id="CHEBI:147286"/>
        <dbReference type="ChEBI" id="CHEBI:147287"/>
        <dbReference type="ChEBI" id="CHEBI:456216"/>
        <dbReference type="EC" id="6.3.5.3"/>
    </reaction>
</comment>
<comment type="pathway">
    <text evidence="2">Purine metabolism; IMP biosynthesis via de novo pathway; 5-amino-1-(5-phospho-D-ribosyl)imidazole from N(2)-formyl-N(1)-(5-phospho-D-ribosyl)glycinamide: step 1/2.</text>
</comment>
<comment type="subunit">
    <text evidence="1">Homodimer. Part of the FGAM synthase complex composed of 1 PurL, 1 PurQ and 2 PurS subunits (By similarity).</text>
</comment>
<comment type="subcellular location">
    <subcellularLocation>
        <location evidence="2">Cytoplasm</location>
    </subcellularLocation>
</comment>
<comment type="similarity">
    <text evidence="2">Belongs to the PurS family.</text>
</comment>
<gene>
    <name evidence="2" type="primary">purS</name>
    <name type="ordered locus">AF_1941</name>
</gene>
<evidence type="ECO:0000250" key="1"/>
<evidence type="ECO:0000255" key="2">
    <source>
        <dbReference type="HAMAP-Rule" id="MF_01926"/>
    </source>
</evidence>
<sequence length="80" mass="9221">MIADVYIELKEGVADPEGEATLKALRLLGFKRVKKVSTVKVFRIDIEARSREEAEREIAEMCEKLLANPVIQKYSIVWRE</sequence>
<feature type="chain" id="PRO_0000100398" description="Phosphoribosylformylglycinamidine synthase subunit PurS">
    <location>
        <begin position="1"/>
        <end position="80"/>
    </location>
</feature>
<organism>
    <name type="scientific">Archaeoglobus fulgidus (strain ATCC 49558 / DSM 4304 / JCM 9628 / NBRC 100126 / VC-16)</name>
    <dbReference type="NCBI Taxonomy" id="224325"/>
    <lineage>
        <taxon>Archaea</taxon>
        <taxon>Methanobacteriati</taxon>
        <taxon>Methanobacteriota</taxon>
        <taxon>Archaeoglobi</taxon>
        <taxon>Archaeoglobales</taxon>
        <taxon>Archaeoglobaceae</taxon>
        <taxon>Archaeoglobus</taxon>
    </lineage>
</organism>